<protein>
    <recommendedName>
        <fullName>Zinc finger protein 585A</fullName>
    </recommendedName>
</protein>
<feature type="chain" id="PRO_0000047678" description="Zinc finger protein 585A">
    <location>
        <begin position="1"/>
        <end position="737"/>
    </location>
</feature>
<feature type="domain" description="KRAB" evidence="2">
    <location>
        <begin position="1"/>
        <end position="65"/>
    </location>
</feature>
<feature type="zinc finger region" description="C2H2-type 1" evidence="1">
    <location>
        <begin position="126"/>
        <end position="148"/>
    </location>
</feature>
<feature type="zinc finger region" description="C2H2-type 2" evidence="1">
    <location>
        <begin position="154"/>
        <end position="176"/>
    </location>
</feature>
<feature type="zinc finger region" description="C2H2-type 3" evidence="1">
    <location>
        <begin position="182"/>
        <end position="204"/>
    </location>
</feature>
<feature type="zinc finger region" description="C2H2-type 4" evidence="1">
    <location>
        <begin position="210"/>
        <end position="232"/>
    </location>
</feature>
<feature type="zinc finger region" description="C2H2-type 5" evidence="1">
    <location>
        <begin position="238"/>
        <end position="260"/>
    </location>
</feature>
<feature type="zinc finger region" description="C2H2-type 6" evidence="1">
    <location>
        <begin position="266"/>
        <end position="288"/>
    </location>
</feature>
<feature type="zinc finger region" description="C2H2-type 7; degenerate" evidence="1">
    <location>
        <begin position="294"/>
        <end position="316"/>
    </location>
</feature>
<feature type="zinc finger region" description="C2H2-type 8" evidence="1">
    <location>
        <begin position="322"/>
        <end position="344"/>
    </location>
</feature>
<feature type="zinc finger region" description="C2H2-type 9" evidence="1">
    <location>
        <begin position="350"/>
        <end position="372"/>
    </location>
</feature>
<feature type="zinc finger region" description="C2H2-type 10" evidence="1">
    <location>
        <begin position="378"/>
        <end position="400"/>
    </location>
</feature>
<feature type="zinc finger region" description="C2H2-type 11" evidence="1">
    <location>
        <begin position="406"/>
        <end position="428"/>
    </location>
</feature>
<feature type="zinc finger region" description="C2H2-type 12" evidence="1">
    <location>
        <begin position="434"/>
        <end position="456"/>
    </location>
</feature>
<feature type="zinc finger region" description="C2H2-type 13" evidence="1">
    <location>
        <begin position="462"/>
        <end position="484"/>
    </location>
</feature>
<feature type="zinc finger region" description="C2H2-type 14" evidence="1">
    <location>
        <begin position="490"/>
        <end position="512"/>
    </location>
</feature>
<feature type="zinc finger region" description="C2H2-type 15" evidence="1">
    <location>
        <begin position="518"/>
        <end position="540"/>
    </location>
</feature>
<feature type="zinc finger region" description="C2H2-type 16" evidence="1">
    <location>
        <begin position="546"/>
        <end position="568"/>
    </location>
</feature>
<feature type="zinc finger region" description="C2H2-type 17" evidence="1">
    <location>
        <begin position="574"/>
        <end position="596"/>
    </location>
</feature>
<feature type="zinc finger region" description="C2H2-type 18" evidence="1">
    <location>
        <begin position="602"/>
        <end position="624"/>
    </location>
</feature>
<feature type="zinc finger region" description="C2H2-type 19" evidence="1">
    <location>
        <begin position="630"/>
        <end position="652"/>
    </location>
</feature>
<feature type="zinc finger region" description="C2H2-type 20" evidence="1">
    <location>
        <begin position="658"/>
        <end position="680"/>
    </location>
</feature>
<feature type="zinc finger region" description="C2H2-type 21" evidence="1">
    <location>
        <begin position="686"/>
        <end position="708"/>
    </location>
</feature>
<feature type="zinc finger region" description="C2H2-type 22" evidence="1">
    <location>
        <begin position="714"/>
        <end position="736"/>
    </location>
</feature>
<proteinExistence type="evidence at transcript level"/>
<gene>
    <name type="primary">ZNF585A</name>
</gene>
<keyword id="KW-0479">Metal-binding</keyword>
<keyword id="KW-0539">Nucleus</keyword>
<keyword id="KW-1185">Reference proteome</keyword>
<keyword id="KW-0677">Repeat</keyword>
<keyword id="KW-0804">Transcription</keyword>
<keyword id="KW-0805">Transcription regulation</keyword>
<keyword id="KW-0862">Zinc</keyword>
<keyword id="KW-0863">Zinc-finger</keyword>
<name>Z585A_PONAB</name>
<sequence length="737" mass="84542">MAAPTREEWRHLDPSQRNLYRDVMLETYSHLLSVGYQVPEAEVVMLEQGKEPWALQGERPRQSCPGKKLWDHNQCRKILSYKQVSSQPQKMYPGEKPYECAEFEKIFTQKSQLKVHLKVLAGEKLYVCIECGKAFVQKPEFIIHQKTHMREKPFKCNECGKSFFQVSSLFRHQRIHTGEKLYECSQCGKGFSYNSDLSIHEKIHTGERHHECTDCGKAFTQKSTLKMHQKIHTGERSYICIECGQAFIQKTHLIAHRRIHTGEKPYECSNCGKSFISKSQLQVHQRVHTRVKPYICTEYGKVFSNNSNLITHKKVQSREKSSICTECGKAFTYRSELIIHQRIHTGEKPYACSDCGKAFTQKSALTVHQRIHTGEKSYICMKCGLAFIQKAHLIAHQIIHTGEKPYKCGHCGKLFTSKSQLHVHKRIHTGEKPYMCNKCGKAFTNRSNLITHQKTHTGEKSYICSKCGKAFTQRSDLITHQRIHTGEKPYECSTCGKAFTQKSHLNIHQKIHTGERQYECHECGKAFNQKSILIVHQKIHTGEKPYVCTECGRAFIRKSNFITHQRIHTGEKPYECSDCGKSFTSKSQLLVHQPLHTGEKPYVCAECGKAFSGRSNLSKHQKTHTGEKPYICSECGKTFRQKSELITHHRIHTGEKPYECSDCGKSFTKKSQLQVHQRIHTGEKPYVCAECGKAFTDRSNLNKHQTTHTGDRPYKCGICGKGFVQKSVFSVHQSNHA</sequence>
<organism>
    <name type="scientific">Pongo abelii</name>
    <name type="common">Sumatran orangutan</name>
    <name type="synonym">Pongo pygmaeus abelii</name>
    <dbReference type="NCBI Taxonomy" id="9601"/>
    <lineage>
        <taxon>Eukaryota</taxon>
        <taxon>Metazoa</taxon>
        <taxon>Chordata</taxon>
        <taxon>Craniata</taxon>
        <taxon>Vertebrata</taxon>
        <taxon>Euteleostomi</taxon>
        <taxon>Mammalia</taxon>
        <taxon>Eutheria</taxon>
        <taxon>Euarchontoglires</taxon>
        <taxon>Primates</taxon>
        <taxon>Haplorrhini</taxon>
        <taxon>Catarrhini</taxon>
        <taxon>Hominidae</taxon>
        <taxon>Pongo</taxon>
    </lineage>
</organism>
<accession>Q5RDX1</accession>
<comment type="function">
    <text>May be involved in transcriptional regulation.</text>
</comment>
<comment type="subcellular location">
    <subcellularLocation>
        <location evidence="3">Nucleus</location>
    </subcellularLocation>
</comment>
<comment type="similarity">
    <text evidence="3">Belongs to the krueppel C2H2-type zinc-finger protein family.</text>
</comment>
<evidence type="ECO:0000255" key="1">
    <source>
        <dbReference type="PROSITE-ProRule" id="PRU00042"/>
    </source>
</evidence>
<evidence type="ECO:0000255" key="2">
    <source>
        <dbReference type="PROSITE-ProRule" id="PRU00119"/>
    </source>
</evidence>
<evidence type="ECO:0000305" key="3"/>
<reference key="1">
    <citation type="submission" date="2004-11" db="EMBL/GenBank/DDBJ databases">
        <authorList>
            <consortium name="The German cDNA consortium"/>
        </authorList>
    </citation>
    <scope>NUCLEOTIDE SEQUENCE [LARGE SCALE MRNA]</scope>
    <source>
        <tissue>Heart</tissue>
    </source>
</reference>
<dbReference type="EMBL" id="CR857771">
    <property type="protein sequence ID" value="CAH90036.1"/>
    <property type="molecule type" value="mRNA"/>
</dbReference>
<dbReference type="RefSeq" id="NP_001124970.1">
    <property type="nucleotide sequence ID" value="NM_001131498.1"/>
</dbReference>
<dbReference type="SMR" id="Q5RDX1"/>
<dbReference type="GeneID" id="100171843"/>
<dbReference type="KEGG" id="pon:100171843"/>
<dbReference type="CTD" id="199704"/>
<dbReference type="InParanoid" id="Q5RDX1"/>
<dbReference type="OrthoDB" id="654211at2759"/>
<dbReference type="Proteomes" id="UP000001595">
    <property type="component" value="Unplaced"/>
</dbReference>
<dbReference type="GO" id="GO:0005634">
    <property type="term" value="C:nucleus"/>
    <property type="evidence" value="ECO:0007669"/>
    <property type="project" value="UniProtKB-SubCell"/>
</dbReference>
<dbReference type="GO" id="GO:0000981">
    <property type="term" value="F:DNA-binding transcription factor activity, RNA polymerase II-specific"/>
    <property type="evidence" value="ECO:0007669"/>
    <property type="project" value="TreeGrafter"/>
</dbReference>
<dbReference type="GO" id="GO:0000977">
    <property type="term" value="F:RNA polymerase II transcription regulatory region sequence-specific DNA binding"/>
    <property type="evidence" value="ECO:0007669"/>
    <property type="project" value="TreeGrafter"/>
</dbReference>
<dbReference type="GO" id="GO:0008270">
    <property type="term" value="F:zinc ion binding"/>
    <property type="evidence" value="ECO:0007669"/>
    <property type="project" value="UniProtKB-KW"/>
</dbReference>
<dbReference type="CDD" id="cd07765">
    <property type="entry name" value="KRAB_A-box"/>
    <property type="match status" value="1"/>
</dbReference>
<dbReference type="FunFam" id="3.30.160.60:FF:000446">
    <property type="entry name" value="Zinc finger protein"/>
    <property type="match status" value="1"/>
</dbReference>
<dbReference type="FunFam" id="3.30.160.60:FF:000478">
    <property type="entry name" value="Zinc finger protein 133"/>
    <property type="match status" value="1"/>
</dbReference>
<dbReference type="FunFam" id="3.30.160.60:FF:000295">
    <property type="entry name" value="zinc finger protein 19"/>
    <property type="match status" value="3"/>
</dbReference>
<dbReference type="FunFam" id="3.30.160.60:FF:000622">
    <property type="entry name" value="zinc finger protein 26 isoform X3"/>
    <property type="match status" value="1"/>
</dbReference>
<dbReference type="FunFam" id="3.30.160.60:FF:001049">
    <property type="entry name" value="zinc finger protein 319"/>
    <property type="match status" value="1"/>
</dbReference>
<dbReference type="FunFam" id="3.30.160.60:FF:002343">
    <property type="entry name" value="Zinc finger protein 33A"/>
    <property type="match status" value="1"/>
</dbReference>
<dbReference type="FunFam" id="3.30.160.60:FF:002090">
    <property type="entry name" value="Zinc finger protein 473"/>
    <property type="match status" value="1"/>
</dbReference>
<dbReference type="FunFam" id="3.30.160.60:FF:000268">
    <property type="entry name" value="zinc finger protein 484 isoform X2"/>
    <property type="match status" value="3"/>
</dbReference>
<dbReference type="FunFam" id="3.30.160.60:FF:002254">
    <property type="entry name" value="Zinc finger protein 540"/>
    <property type="match status" value="1"/>
</dbReference>
<dbReference type="FunFam" id="3.30.160.60:FF:001270">
    <property type="entry name" value="zinc finger protein 583 isoform X1"/>
    <property type="match status" value="1"/>
</dbReference>
<dbReference type="FunFam" id="3.30.160.60:FF:000754">
    <property type="entry name" value="Zinc finger protein 585A"/>
    <property type="match status" value="4"/>
</dbReference>
<dbReference type="FunFam" id="3.30.160.60:FF:001361">
    <property type="entry name" value="Zinc finger protein 585A"/>
    <property type="match status" value="1"/>
</dbReference>
<dbReference type="FunFam" id="3.30.160.60:FF:001377">
    <property type="entry name" value="Zinc finger protein 585A"/>
    <property type="match status" value="1"/>
</dbReference>
<dbReference type="FunFam" id="3.30.160.60:FF:001396">
    <property type="entry name" value="Zinc finger protein 585A"/>
    <property type="match status" value="1"/>
</dbReference>
<dbReference type="FunFam" id="3.30.160.60:FF:001475">
    <property type="entry name" value="Zinc finger protein 585A"/>
    <property type="match status" value="1"/>
</dbReference>
<dbReference type="FunFam" id="3.30.160.60:FF:002931">
    <property type="entry name" value="zinc finger protein 585A-like"/>
    <property type="match status" value="1"/>
</dbReference>
<dbReference type="Gene3D" id="6.10.140.140">
    <property type="match status" value="1"/>
</dbReference>
<dbReference type="Gene3D" id="3.30.160.60">
    <property type="entry name" value="Classic Zinc Finger"/>
    <property type="match status" value="23"/>
</dbReference>
<dbReference type="InterPro" id="IPR001909">
    <property type="entry name" value="KRAB"/>
</dbReference>
<dbReference type="InterPro" id="IPR036051">
    <property type="entry name" value="KRAB_dom_sf"/>
</dbReference>
<dbReference type="InterPro" id="IPR036236">
    <property type="entry name" value="Znf_C2H2_sf"/>
</dbReference>
<dbReference type="InterPro" id="IPR013087">
    <property type="entry name" value="Znf_C2H2_type"/>
</dbReference>
<dbReference type="PANTHER" id="PTHR24381">
    <property type="entry name" value="ZINC FINGER PROTEIN"/>
    <property type="match status" value="1"/>
</dbReference>
<dbReference type="PANTHER" id="PTHR24381:SF405">
    <property type="entry name" value="ZINC FINGER PROTEIN 175"/>
    <property type="match status" value="1"/>
</dbReference>
<dbReference type="Pfam" id="PF01352">
    <property type="entry name" value="KRAB"/>
    <property type="match status" value="1"/>
</dbReference>
<dbReference type="Pfam" id="PF00096">
    <property type="entry name" value="zf-C2H2"/>
    <property type="match status" value="21"/>
</dbReference>
<dbReference type="SMART" id="SM00349">
    <property type="entry name" value="KRAB"/>
    <property type="match status" value="1"/>
</dbReference>
<dbReference type="SMART" id="SM00355">
    <property type="entry name" value="ZnF_C2H2"/>
    <property type="match status" value="21"/>
</dbReference>
<dbReference type="SUPFAM" id="SSF57667">
    <property type="entry name" value="beta-beta-alpha zinc fingers"/>
    <property type="match status" value="12"/>
</dbReference>
<dbReference type="SUPFAM" id="SSF109640">
    <property type="entry name" value="KRAB domain (Kruppel-associated box)"/>
    <property type="match status" value="1"/>
</dbReference>
<dbReference type="PROSITE" id="PS50805">
    <property type="entry name" value="KRAB"/>
    <property type="match status" value="1"/>
</dbReference>
<dbReference type="PROSITE" id="PS00028">
    <property type="entry name" value="ZINC_FINGER_C2H2_1"/>
    <property type="match status" value="21"/>
</dbReference>
<dbReference type="PROSITE" id="PS50157">
    <property type="entry name" value="ZINC_FINGER_C2H2_2"/>
    <property type="match status" value="23"/>
</dbReference>